<comment type="function">
    <text evidence="1">Cleaves peptides in various proteins in a process that requires ATP hydrolysis. Has a chymotrypsin-like activity. Plays a major role in the degradation of misfolded proteins.</text>
</comment>
<comment type="catalytic activity">
    <reaction evidence="1">
        <text>Hydrolysis of proteins to small peptides in the presence of ATP and magnesium. alpha-casein is the usual test substrate. In the absence of ATP, only oligopeptides shorter than five residues are hydrolyzed (such as succinyl-Leu-Tyr-|-NHMec, and Leu-Tyr-Leu-|-Tyr-Trp, in which cleavage of the -Tyr-|-Leu- and -Tyr-|-Trp bonds also occurs).</text>
        <dbReference type="EC" id="3.4.21.92"/>
    </reaction>
</comment>
<comment type="subunit">
    <text evidence="1">Fourteen ClpP subunits assemble into 2 heptameric rings which stack back to back to give a disk-like structure with a central cavity, resembling the structure of eukaryotic proteasomes.</text>
</comment>
<comment type="subcellular location">
    <subcellularLocation>
        <location evidence="1">Cytoplasm</location>
    </subcellularLocation>
</comment>
<comment type="similarity">
    <text evidence="1">Belongs to the peptidase S14 family.</text>
</comment>
<name>CLPP_FRATT</name>
<gene>
    <name evidence="1" type="primary">clpP</name>
    <name type="ordered locus">FTT_0624</name>
</gene>
<feature type="chain" id="PRO_0000179558" description="ATP-dependent Clp protease proteolytic subunit">
    <location>
        <begin position="1"/>
        <end position="201"/>
    </location>
</feature>
<feature type="active site" description="Nucleophile" evidence="1">
    <location>
        <position position="101"/>
    </location>
</feature>
<feature type="active site" evidence="1">
    <location>
        <position position="126"/>
    </location>
</feature>
<feature type="strand" evidence="5">
    <location>
        <begin position="9"/>
        <end position="11"/>
    </location>
</feature>
<feature type="strand" evidence="4">
    <location>
        <begin position="15"/>
        <end position="17"/>
    </location>
</feature>
<feature type="strand" evidence="5">
    <location>
        <begin position="20"/>
        <end position="22"/>
    </location>
</feature>
<feature type="helix" evidence="5">
    <location>
        <begin position="23"/>
        <end position="28"/>
    </location>
</feature>
<feature type="turn" evidence="5">
    <location>
        <begin position="29"/>
        <end position="31"/>
    </location>
</feature>
<feature type="strand" evidence="5">
    <location>
        <begin position="32"/>
        <end position="37"/>
    </location>
</feature>
<feature type="helix" evidence="5">
    <location>
        <begin position="41"/>
        <end position="57"/>
    </location>
</feature>
<feature type="strand" evidence="5">
    <location>
        <begin position="59"/>
        <end position="61"/>
    </location>
</feature>
<feature type="strand" evidence="5">
    <location>
        <begin position="63"/>
        <end position="69"/>
    </location>
</feature>
<feature type="helix" evidence="5">
    <location>
        <begin position="74"/>
        <end position="86"/>
    </location>
</feature>
<feature type="strand" evidence="5">
    <location>
        <begin position="87"/>
        <end position="89"/>
    </location>
</feature>
<feature type="strand" evidence="5">
    <location>
        <begin position="91"/>
        <end position="100"/>
    </location>
</feature>
<feature type="helix" evidence="5">
    <location>
        <begin position="102"/>
        <end position="108"/>
    </location>
</feature>
<feature type="strand" evidence="5">
    <location>
        <begin position="115"/>
        <end position="117"/>
    </location>
</feature>
<feature type="strand" evidence="5">
    <location>
        <begin position="122"/>
        <end position="125"/>
    </location>
</feature>
<feature type="strand" evidence="2">
    <location>
        <begin position="129"/>
        <end position="135"/>
    </location>
</feature>
<feature type="helix" evidence="5">
    <location>
        <begin position="136"/>
        <end position="161"/>
    </location>
</feature>
<feature type="helix" evidence="5">
    <location>
        <begin position="165"/>
        <end position="172"/>
    </location>
</feature>
<feature type="turn" evidence="3">
    <location>
        <begin position="173"/>
        <end position="175"/>
    </location>
</feature>
<feature type="strand" evidence="5">
    <location>
        <begin position="176"/>
        <end position="179"/>
    </location>
</feature>
<feature type="helix" evidence="5">
    <location>
        <begin position="180"/>
        <end position="186"/>
    </location>
</feature>
<feature type="strand" evidence="5">
    <location>
        <begin position="190"/>
        <end position="192"/>
    </location>
</feature>
<sequence>MITNNLVPTVIEKTAGGERAFDIYSRLLKERIVFLNGEVNDHSANLVIAQLLFLESEDPDKDIYFYINSPGGMVTAGMGVYDTMQFIKPDVSTICIGLAASMGSLLLAGGAKGKRYSLPSSQIMIHQPLGGFRGQASDIEIHAKNILRIKDRLNKVLAHHTGQDLETIVKDTDRDNFMMADEAKAYGLIDHVIESREAIIK</sequence>
<evidence type="ECO:0000255" key="1">
    <source>
        <dbReference type="HAMAP-Rule" id="MF_00444"/>
    </source>
</evidence>
<evidence type="ECO:0007829" key="2">
    <source>
        <dbReference type="PDB" id="3P2L"/>
    </source>
</evidence>
<evidence type="ECO:0007829" key="3">
    <source>
        <dbReference type="PDB" id="5G1Q"/>
    </source>
</evidence>
<evidence type="ECO:0007829" key="4">
    <source>
        <dbReference type="PDB" id="5G1R"/>
    </source>
</evidence>
<evidence type="ECO:0007829" key="5">
    <source>
        <dbReference type="PDB" id="5G1S"/>
    </source>
</evidence>
<reference key="1">
    <citation type="journal article" date="2005" name="Nat. Genet.">
        <title>The complete genome sequence of Francisella tularensis, the causative agent of tularemia.</title>
        <authorList>
            <person name="Larsson P."/>
            <person name="Oyston P.C.F."/>
            <person name="Chain P."/>
            <person name="Chu M.C."/>
            <person name="Duffield M."/>
            <person name="Fuxelius H.-H."/>
            <person name="Garcia E."/>
            <person name="Haelltorp G."/>
            <person name="Johansson D."/>
            <person name="Isherwood K.E."/>
            <person name="Karp P.D."/>
            <person name="Larsson E."/>
            <person name="Liu Y."/>
            <person name="Michell S."/>
            <person name="Prior J."/>
            <person name="Prior R."/>
            <person name="Malfatti S."/>
            <person name="Sjoestedt A."/>
            <person name="Svensson K."/>
            <person name="Thompson N."/>
            <person name="Vergez L."/>
            <person name="Wagg J.K."/>
            <person name="Wren B.W."/>
            <person name="Lindler L.E."/>
            <person name="Andersson S.G.E."/>
            <person name="Forsman M."/>
            <person name="Titball R.W."/>
        </authorList>
    </citation>
    <scope>NUCLEOTIDE SEQUENCE [LARGE SCALE GENOMIC DNA]</scope>
    <source>
        <strain>SCHU S4 / Schu 4</strain>
    </source>
</reference>
<keyword id="KW-0002">3D-structure</keyword>
<keyword id="KW-0963">Cytoplasm</keyword>
<keyword id="KW-0378">Hydrolase</keyword>
<keyword id="KW-0645">Protease</keyword>
<keyword id="KW-1185">Reference proteome</keyword>
<keyword id="KW-0720">Serine protease</keyword>
<accession>Q5NH47</accession>
<organism>
    <name type="scientific">Francisella tularensis subsp. tularensis (strain SCHU S4 / Schu 4)</name>
    <dbReference type="NCBI Taxonomy" id="177416"/>
    <lineage>
        <taxon>Bacteria</taxon>
        <taxon>Pseudomonadati</taxon>
        <taxon>Pseudomonadota</taxon>
        <taxon>Gammaproteobacteria</taxon>
        <taxon>Thiotrichales</taxon>
        <taxon>Francisellaceae</taxon>
        <taxon>Francisella</taxon>
    </lineage>
</organism>
<proteinExistence type="evidence at protein level"/>
<protein>
    <recommendedName>
        <fullName evidence="1">ATP-dependent Clp protease proteolytic subunit</fullName>
        <ecNumber evidence="1">3.4.21.92</ecNumber>
    </recommendedName>
    <alternativeName>
        <fullName evidence="1">Endopeptidase Clp</fullName>
    </alternativeName>
</protein>
<dbReference type="EC" id="3.4.21.92" evidence="1"/>
<dbReference type="EMBL" id="AJ749949">
    <property type="protein sequence ID" value="CAG45257.1"/>
    <property type="molecule type" value="Genomic_DNA"/>
</dbReference>
<dbReference type="RefSeq" id="WP_003015534.1">
    <property type="nucleotide sequence ID" value="NZ_CP010290.1"/>
</dbReference>
<dbReference type="RefSeq" id="YP_169645.1">
    <property type="nucleotide sequence ID" value="NC_006570.2"/>
</dbReference>
<dbReference type="PDB" id="3P2L">
    <property type="method" value="X-ray"/>
    <property type="resolution" value="2.30 A"/>
    <property type="chains" value="A/B/C/D/E/F/G=4-201"/>
</dbReference>
<dbReference type="PDB" id="5G1Q">
    <property type="method" value="X-ray"/>
    <property type="resolution" value="2.84 A"/>
    <property type="chains" value="A/B/C/D/E/F/G=1-201"/>
</dbReference>
<dbReference type="PDB" id="5G1R">
    <property type="method" value="X-ray"/>
    <property type="resolution" value="1.90 A"/>
    <property type="chains" value="A/B/C/D/E/F/G=1-201"/>
</dbReference>
<dbReference type="PDB" id="5G1S">
    <property type="method" value="X-ray"/>
    <property type="resolution" value="1.70 A"/>
    <property type="chains" value="A/B/C/D/E/F/G/H/I/J/K/L/M/N/O/P/Q/R/S/T/U=1-201"/>
</dbReference>
<dbReference type="PDBsum" id="3P2L"/>
<dbReference type="PDBsum" id="5G1Q"/>
<dbReference type="PDBsum" id="5G1R"/>
<dbReference type="PDBsum" id="5G1S"/>
<dbReference type="SMR" id="Q5NH47"/>
<dbReference type="IntAct" id="Q5NH47">
    <property type="interactions" value="1"/>
</dbReference>
<dbReference type="STRING" id="177416.FTT_0624"/>
<dbReference type="MEROPS" id="S14.001"/>
<dbReference type="DNASU" id="3192361"/>
<dbReference type="EnsemblBacteria" id="CAG45257">
    <property type="protein sequence ID" value="CAG45257"/>
    <property type="gene ID" value="FTT_0624"/>
</dbReference>
<dbReference type="GeneID" id="75265209"/>
<dbReference type="KEGG" id="ftu:FTT_0624"/>
<dbReference type="eggNOG" id="COG0740">
    <property type="taxonomic scope" value="Bacteria"/>
</dbReference>
<dbReference type="OrthoDB" id="9802800at2"/>
<dbReference type="EvolutionaryTrace" id="Q5NH47"/>
<dbReference type="Proteomes" id="UP000001174">
    <property type="component" value="Chromosome"/>
</dbReference>
<dbReference type="GO" id="GO:0005737">
    <property type="term" value="C:cytoplasm"/>
    <property type="evidence" value="ECO:0007669"/>
    <property type="project" value="UniProtKB-SubCell"/>
</dbReference>
<dbReference type="GO" id="GO:0009368">
    <property type="term" value="C:endopeptidase Clp complex"/>
    <property type="evidence" value="ECO:0007669"/>
    <property type="project" value="TreeGrafter"/>
</dbReference>
<dbReference type="GO" id="GO:0004176">
    <property type="term" value="F:ATP-dependent peptidase activity"/>
    <property type="evidence" value="ECO:0007669"/>
    <property type="project" value="InterPro"/>
</dbReference>
<dbReference type="GO" id="GO:0051117">
    <property type="term" value="F:ATPase binding"/>
    <property type="evidence" value="ECO:0007669"/>
    <property type="project" value="TreeGrafter"/>
</dbReference>
<dbReference type="GO" id="GO:0004252">
    <property type="term" value="F:serine-type endopeptidase activity"/>
    <property type="evidence" value="ECO:0007669"/>
    <property type="project" value="UniProtKB-UniRule"/>
</dbReference>
<dbReference type="GO" id="GO:0006515">
    <property type="term" value="P:protein quality control for misfolded or incompletely synthesized proteins"/>
    <property type="evidence" value="ECO:0007669"/>
    <property type="project" value="TreeGrafter"/>
</dbReference>
<dbReference type="CDD" id="cd07017">
    <property type="entry name" value="S14_ClpP_2"/>
    <property type="match status" value="1"/>
</dbReference>
<dbReference type="FunFam" id="3.90.226.10:FF:000001">
    <property type="entry name" value="ATP-dependent Clp protease proteolytic subunit"/>
    <property type="match status" value="1"/>
</dbReference>
<dbReference type="Gene3D" id="3.90.226.10">
    <property type="entry name" value="2-enoyl-CoA Hydratase, Chain A, domain 1"/>
    <property type="match status" value="1"/>
</dbReference>
<dbReference type="HAMAP" id="MF_00444">
    <property type="entry name" value="ClpP"/>
    <property type="match status" value="1"/>
</dbReference>
<dbReference type="InterPro" id="IPR001907">
    <property type="entry name" value="ClpP"/>
</dbReference>
<dbReference type="InterPro" id="IPR029045">
    <property type="entry name" value="ClpP/crotonase-like_dom_sf"/>
</dbReference>
<dbReference type="InterPro" id="IPR023562">
    <property type="entry name" value="ClpP/TepA"/>
</dbReference>
<dbReference type="InterPro" id="IPR033135">
    <property type="entry name" value="ClpP_His_AS"/>
</dbReference>
<dbReference type="InterPro" id="IPR018215">
    <property type="entry name" value="ClpP_Ser_AS"/>
</dbReference>
<dbReference type="NCBIfam" id="TIGR00493">
    <property type="entry name" value="clpP"/>
    <property type="match status" value="1"/>
</dbReference>
<dbReference type="NCBIfam" id="NF001368">
    <property type="entry name" value="PRK00277.1"/>
    <property type="match status" value="1"/>
</dbReference>
<dbReference type="NCBIfam" id="NF009205">
    <property type="entry name" value="PRK12553.1"/>
    <property type="match status" value="1"/>
</dbReference>
<dbReference type="PANTHER" id="PTHR10381">
    <property type="entry name" value="ATP-DEPENDENT CLP PROTEASE PROTEOLYTIC SUBUNIT"/>
    <property type="match status" value="1"/>
</dbReference>
<dbReference type="PANTHER" id="PTHR10381:SF70">
    <property type="entry name" value="ATP-DEPENDENT CLP PROTEASE PROTEOLYTIC SUBUNIT"/>
    <property type="match status" value="1"/>
</dbReference>
<dbReference type="Pfam" id="PF00574">
    <property type="entry name" value="CLP_protease"/>
    <property type="match status" value="1"/>
</dbReference>
<dbReference type="PRINTS" id="PR00127">
    <property type="entry name" value="CLPPROTEASEP"/>
</dbReference>
<dbReference type="SUPFAM" id="SSF52096">
    <property type="entry name" value="ClpP/crotonase"/>
    <property type="match status" value="1"/>
</dbReference>
<dbReference type="PROSITE" id="PS00382">
    <property type="entry name" value="CLP_PROTEASE_HIS"/>
    <property type="match status" value="1"/>
</dbReference>
<dbReference type="PROSITE" id="PS00381">
    <property type="entry name" value="CLP_PROTEASE_SER"/>
    <property type="match status" value="1"/>
</dbReference>